<sequence>MAAAGAGPGPGPGAPPGLEAALQKLALRRKKVLSAEEMELFELAQAAGGAMDPDVFKILVDLLKLNVAPLAVFQMLKSMCAGQRVASDSQDPTAAPLPTPSVPETRGRNKGGGALGGGPALAERGGRDGPGQRMPRQPSASRLPKGGGPGRSPPRSGT</sequence>
<name>MZT2_BOVIN</name>
<comment type="function">
    <text evidence="2">Required for the recruitment and the assembly of the gamma-tubulin ring complex (gTuRC) at the centrosome (By similarity). The gTuRC regulates the minus-end nucleation of alpha-beta tubulin heterodimers that grow into microtubule protafilaments, a critical step in centrosome duplication and spindle formation (By similarity).</text>
</comment>
<comment type="subunit">
    <text evidence="2">Associates with the gamma-tubulin ring complex (gTuRC) consisting of TUBGCP2, TUBGCP3, TUBGCP4, TUBGCP5 and TUBGCP6 and gamma-tubulin TUBG1 or TUBG2; within the complex, interacts with TUBGCP2; the interaction plays a role in gTuRC activation.</text>
</comment>
<comment type="subcellular location">
    <subcellularLocation>
        <location evidence="3">Cytoplasm</location>
        <location evidence="3">Cytoskeleton</location>
        <location evidence="3">Microtubule organizing center</location>
        <location evidence="3">Centrosome</location>
    </subcellularLocation>
    <subcellularLocation>
        <location evidence="3">Cytoplasm</location>
        <location evidence="3">Cytoskeleton</location>
        <location evidence="3">Spindle</location>
    </subcellularLocation>
</comment>
<comment type="similarity">
    <text evidence="5">Belongs to the MOZART2 family.</text>
</comment>
<reference key="1">
    <citation type="submission" date="2007-06" db="EMBL/GenBank/DDBJ databases">
        <authorList>
            <consortium name="NIH - Mammalian Gene Collection (MGC) project"/>
        </authorList>
    </citation>
    <scope>NUCLEOTIDE SEQUENCE [LARGE SCALE MRNA]</scope>
    <source>
        <strain>Hereford</strain>
        <tissue>Fetal cerebellum</tissue>
    </source>
</reference>
<keyword id="KW-0963">Cytoplasm</keyword>
<keyword id="KW-0206">Cytoskeleton</keyword>
<keyword id="KW-0597">Phosphoprotein</keyword>
<keyword id="KW-1185">Reference proteome</keyword>
<proteinExistence type="evidence at transcript level"/>
<organism>
    <name type="scientific">Bos taurus</name>
    <name type="common">Bovine</name>
    <dbReference type="NCBI Taxonomy" id="9913"/>
    <lineage>
        <taxon>Eukaryota</taxon>
        <taxon>Metazoa</taxon>
        <taxon>Chordata</taxon>
        <taxon>Craniata</taxon>
        <taxon>Vertebrata</taxon>
        <taxon>Euteleostomi</taxon>
        <taxon>Mammalia</taxon>
        <taxon>Eutheria</taxon>
        <taxon>Laurasiatheria</taxon>
        <taxon>Artiodactyla</taxon>
        <taxon>Ruminantia</taxon>
        <taxon>Pecora</taxon>
        <taxon>Bovidae</taxon>
        <taxon>Bovinae</taxon>
        <taxon>Bos</taxon>
    </lineage>
</organism>
<gene>
    <name type="primary">MZT2</name>
    <name type="synonym">FAM128</name>
    <name type="synonym">MOZART2</name>
</gene>
<feature type="chain" id="PRO_0000338985" description="Mitotic-spindle organizing protein 2">
    <location>
        <begin position="1"/>
        <end position="158"/>
    </location>
</feature>
<feature type="region of interest" description="Disordered" evidence="4">
    <location>
        <begin position="81"/>
        <end position="158"/>
    </location>
</feature>
<feature type="compositionally biased region" description="Gly residues" evidence="4">
    <location>
        <begin position="110"/>
        <end position="119"/>
    </location>
</feature>
<feature type="modified residue" description="Phosphoserine" evidence="1">
    <location>
        <position position="34"/>
    </location>
</feature>
<feature type="modified residue" description="Phosphoserine" evidence="1">
    <location>
        <position position="152"/>
    </location>
</feature>
<protein>
    <recommendedName>
        <fullName>Mitotic-spindle organizing protein 2</fullName>
    </recommendedName>
    <alternativeName>
        <fullName>Mitotic-spindle organizing protein associated with a ring of gamma-tubulin 2</fullName>
    </alternativeName>
</protein>
<dbReference type="EMBL" id="BC142257">
    <property type="protein sequence ID" value="AAI42258.1"/>
    <property type="molecule type" value="mRNA"/>
</dbReference>
<dbReference type="RefSeq" id="NP_001092674.1">
    <property type="nucleotide sequence ID" value="NM_001099204.2"/>
</dbReference>
<dbReference type="SMR" id="A5PJV8"/>
<dbReference type="FunCoup" id="A5PJV8">
    <property type="interactions" value="523"/>
</dbReference>
<dbReference type="STRING" id="9913.ENSBTAP00000019502"/>
<dbReference type="PaxDb" id="9913-ENSBTAP00000019502"/>
<dbReference type="Ensembl" id="ENSBTAT00000019502.4">
    <property type="protein sequence ID" value="ENSBTAP00000019502.3"/>
    <property type="gene ID" value="ENSBTAG00000014646.5"/>
</dbReference>
<dbReference type="GeneID" id="787548"/>
<dbReference type="KEGG" id="bta:787548"/>
<dbReference type="CTD" id="80097"/>
<dbReference type="VEuPathDB" id="HostDB:ENSBTAG00000014646"/>
<dbReference type="eggNOG" id="ENOG502S50R">
    <property type="taxonomic scope" value="Eukaryota"/>
</dbReference>
<dbReference type="GeneTree" id="ENSGT00390000014845"/>
<dbReference type="HOGENOM" id="CLU_105461_0_0_1"/>
<dbReference type="InParanoid" id="A5PJV8"/>
<dbReference type="OMA" id="MCAGQRA"/>
<dbReference type="OrthoDB" id="10064769at2759"/>
<dbReference type="TreeFam" id="TF333013"/>
<dbReference type="Reactome" id="R-BTA-380270">
    <property type="pathway name" value="Recruitment of mitotic centrosome proteins and complexes"/>
</dbReference>
<dbReference type="Reactome" id="R-BTA-380320">
    <property type="pathway name" value="Recruitment of NuMA to mitotic centrosomes"/>
</dbReference>
<dbReference type="Proteomes" id="UP000009136">
    <property type="component" value="Chromosome 17"/>
</dbReference>
<dbReference type="Bgee" id="ENSBTAG00000014646">
    <property type="expression patterns" value="Expressed in laryngeal cartilage and 111 other cell types or tissues"/>
</dbReference>
<dbReference type="GO" id="GO:0005813">
    <property type="term" value="C:centrosome"/>
    <property type="evidence" value="ECO:0000250"/>
    <property type="project" value="UniProtKB"/>
</dbReference>
<dbReference type="GO" id="GO:0005737">
    <property type="term" value="C:cytoplasm"/>
    <property type="evidence" value="ECO:0007669"/>
    <property type="project" value="UniProtKB-KW"/>
</dbReference>
<dbReference type="GO" id="GO:0000931">
    <property type="term" value="C:gamma-tubulin ring complex"/>
    <property type="evidence" value="ECO:0000250"/>
    <property type="project" value="UniProtKB"/>
</dbReference>
<dbReference type="GO" id="GO:0005819">
    <property type="term" value="C:spindle"/>
    <property type="evidence" value="ECO:0000250"/>
    <property type="project" value="UniProtKB"/>
</dbReference>
<dbReference type="InterPro" id="IPR024332">
    <property type="entry name" value="MOZART2"/>
</dbReference>
<dbReference type="PANTHER" id="PTHR28578:SF2">
    <property type="entry name" value="MITOTIC-SPINDLE ORGANIZING PROTEIN 2"/>
    <property type="match status" value="1"/>
</dbReference>
<dbReference type="PANTHER" id="PTHR28578">
    <property type="entry name" value="MITOTIC-SPINDLE ORGANIZING PROTEIN 2A-RELATED"/>
    <property type="match status" value="1"/>
</dbReference>
<dbReference type="Pfam" id="PF12926">
    <property type="entry name" value="MOZART2"/>
    <property type="match status" value="1"/>
</dbReference>
<accession>A5PJV8</accession>
<evidence type="ECO:0000250" key="1">
    <source>
        <dbReference type="UniProtKB" id="Q6NZ67"/>
    </source>
</evidence>
<evidence type="ECO:0000250" key="2">
    <source>
        <dbReference type="UniProtKB" id="Q6P582"/>
    </source>
</evidence>
<evidence type="ECO:0000250" key="3">
    <source>
        <dbReference type="UniProtKB" id="Q9CQ25"/>
    </source>
</evidence>
<evidence type="ECO:0000256" key="4">
    <source>
        <dbReference type="SAM" id="MobiDB-lite"/>
    </source>
</evidence>
<evidence type="ECO:0000305" key="5"/>